<keyword id="KW-1185">Reference proteome</keyword>
<keyword id="KW-0687">Ribonucleoprotein</keyword>
<keyword id="KW-0689">Ribosomal protein</keyword>
<keyword id="KW-0694">RNA-binding</keyword>
<keyword id="KW-0699">rRNA-binding</keyword>
<dbReference type="EMBL" id="AE009439">
    <property type="protein sequence ID" value="AAM01627.1"/>
    <property type="molecule type" value="Genomic_DNA"/>
</dbReference>
<dbReference type="RefSeq" id="WP_011018782.1">
    <property type="nucleotide sequence ID" value="NC_003551.1"/>
</dbReference>
<dbReference type="SMR" id="Q8TY93"/>
<dbReference type="FunCoup" id="Q8TY93">
    <property type="interactions" value="143"/>
</dbReference>
<dbReference type="STRING" id="190192.MK0412"/>
<dbReference type="PaxDb" id="190192-MK0412"/>
<dbReference type="EnsemblBacteria" id="AAM01627">
    <property type="protein sequence ID" value="AAM01627"/>
    <property type="gene ID" value="MK0412"/>
</dbReference>
<dbReference type="GeneID" id="1477715"/>
<dbReference type="KEGG" id="mka:MK0412"/>
<dbReference type="PATRIC" id="fig|190192.8.peg.441"/>
<dbReference type="HOGENOM" id="CLU_036235_0_3_2"/>
<dbReference type="InParanoid" id="Q8TY93"/>
<dbReference type="OrthoDB" id="5987at2157"/>
<dbReference type="Proteomes" id="UP000001826">
    <property type="component" value="Chromosome"/>
</dbReference>
<dbReference type="GO" id="GO:0022625">
    <property type="term" value="C:cytosolic large ribosomal subunit"/>
    <property type="evidence" value="ECO:0007669"/>
    <property type="project" value="TreeGrafter"/>
</dbReference>
<dbReference type="GO" id="GO:0019843">
    <property type="term" value="F:rRNA binding"/>
    <property type="evidence" value="ECO:0007669"/>
    <property type="project" value="UniProtKB-UniRule"/>
</dbReference>
<dbReference type="GO" id="GO:0003735">
    <property type="term" value="F:structural constituent of ribosome"/>
    <property type="evidence" value="ECO:0007669"/>
    <property type="project" value="InterPro"/>
</dbReference>
<dbReference type="GO" id="GO:0002181">
    <property type="term" value="P:cytoplasmic translation"/>
    <property type="evidence" value="ECO:0007669"/>
    <property type="project" value="TreeGrafter"/>
</dbReference>
<dbReference type="FunFam" id="2.40.50.140:FF:000020">
    <property type="entry name" value="60S ribosomal protein L2"/>
    <property type="match status" value="1"/>
</dbReference>
<dbReference type="FunFam" id="4.10.950.10:FF:000002">
    <property type="entry name" value="60S ribosomal protein L2"/>
    <property type="match status" value="1"/>
</dbReference>
<dbReference type="Gene3D" id="2.30.30.30">
    <property type="match status" value="1"/>
</dbReference>
<dbReference type="Gene3D" id="2.40.50.140">
    <property type="entry name" value="Nucleic acid-binding proteins"/>
    <property type="match status" value="1"/>
</dbReference>
<dbReference type="Gene3D" id="4.10.950.10">
    <property type="entry name" value="Ribosomal protein L2, domain 3"/>
    <property type="match status" value="1"/>
</dbReference>
<dbReference type="HAMAP" id="MF_01320_A">
    <property type="entry name" value="Ribosomal_uL2_A"/>
    <property type="match status" value="1"/>
</dbReference>
<dbReference type="InterPro" id="IPR012340">
    <property type="entry name" value="NA-bd_OB-fold"/>
</dbReference>
<dbReference type="InterPro" id="IPR014722">
    <property type="entry name" value="Rib_uL2_dom2"/>
</dbReference>
<dbReference type="InterPro" id="IPR002171">
    <property type="entry name" value="Ribosomal_uL2"/>
</dbReference>
<dbReference type="InterPro" id="IPR023672">
    <property type="entry name" value="Ribosomal_uL2_arc_euk"/>
</dbReference>
<dbReference type="InterPro" id="IPR022669">
    <property type="entry name" value="Ribosomal_uL2_C"/>
</dbReference>
<dbReference type="InterPro" id="IPR022671">
    <property type="entry name" value="Ribosomal_uL2_CS"/>
</dbReference>
<dbReference type="InterPro" id="IPR014726">
    <property type="entry name" value="Ribosomal_uL2_dom3"/>
</dbReference>
<dbReference type="InterPro" id="IPR022666">
    <property type="entry name" value="Ribosomal_uL2_RNA-bd_dom"/>
</dbReference>
<dbReference type="InterPro" id="IPR008991">
    <property type="entry name" value="Translation_prot_SH3-like_sf"/>
</dbReference>
<dbReference type="NCBIfam" id="NF007180">
    <property type="entry name" value="PRK09612.1"/>
    <property type="match status" value="1"/>
</dbReference>
<dbReference type="PANTHER" id="PTHR13691:SF16">
    <property type="entry name" value="LARGE RIBOSOMAL SUBUNIT PROTEIN UL2"/>
    <property type="match status" value="1"/>
</dbReference>
<dbReference type="PANTHER" id="PTHR13691">
    <property type="entry name" value="RIBOSOMAL PROTEIN L2"/>
    <property type="match status" value="1"/>
</dbReference>
<dbReference type="Pfam" id="PF00181">
    <property type="entry name" value="Ribosomal_L2"/>
    <property type="match status" value="1"/>
</dbReference>
<dbReference type="Pfam" id="PF03947">
    <property type="entry name" value="Ribosomal_L2_C"/>
    <property type="match status" value="1"/>
</dbReference>
<dbReference type="PIRSF" id="PIRSF002158">
    <property type="entry name" value="Ribosomal_L2"/>
    <property type="match status" value="1"/>
</dbReference>
<dbReference type="SMART" id="SM01383">
    <property type="entry name" value="Ribosomal_L2"/>
    <property type="match status" value="1"/>
</dbReference>
<dbReference type="SMART" id="SM01382">
    <property type="entry name" value="Ribosomal_L2_C"/>
    <property type="match status" value="1"/>
</dbReference>
<dbReference type="SUPFAM" id="SSF50249">
    <property type="entry name" value="Nucleic acid-binding proteins"/>
    <property type="match status" value="1"/>
</dbReference>
<dbReference type="SUPFAM" id="SSF50104">
    <property type="entry name" value="Translation proteins SH3-like domain"/>
    <property type="match status" value="1"/>
</dbReference>
<dbReference type="PROSITE" id="PS00467">
    <property type="entry name" value="RIBOSOMAL_L2"/>
    <property type="match status" value="1"/>
</dbReference>
<sequence length="243" mass="26415">MGKRIRPQRLGRGGPTYRAPSHRYRGRIEHRPYDEQEKKGKVVGKVVELLHDPARNAPVARVRFEDGEERLILVPEGTKVGDIIECGVSAEIKPGNTLPLAEIPEGVPIFNIEGQPGDGGKFARAPGCYATIIAHDVGRTYVQLPSGKVRTFDPRCRATIGVMSGGGKREKPFVKAGKKYYHMRSKGGKWPKVRGVAMNAVDHPFGGGNHQSPGKPTTIARGDPPGRKVGHIAARKTGRGGRR</sequence>
<reference key="1">
    <citation type="journal article" date="2002" name="Proc. Natl. Acad. Sci. U.S.A.">
        <title>The complete genome of hyperthermophile Methanopyrus kandleri AV19 and monophyly of archaeal methanogens.</title>
        <authorList>
            <person name="Slesarev A.I."/>
            <person name="Mezhevaya K.V."/>
            <person name="Makarova K.S."/>
            <person name="Polushin N.N."/>
            <person name="Shcherbinina O.V."/>
            <person name="Shakhova V.V."/>
            <person name="Belova G.I."/>
            <person name="Aravind L."/>
            <person name="Natale D.A."/>
            <person name="Rogozin I.B."/>
            <person name="Tatusov R.L."/>
            <person name="Wolf Y.I."/>
            <person name="Stetter K.O."/>
            <person name="Malykh A.G."/>
            <person name="Koonin E.V."/>
            <person name="Kozyavkin S.A."/>
        </authorList>
    </citation>
    <scope>NUCLEOTIDE SEQUENCE [LARGE SCALE GENOMIC DNA]</scope>
    <source>
        <strain>AV19 / DSM 6324 / JCM 9639 / NBRC 100938</strain>
    </source>
</reference>
<comment type="function">
    <text evidence="1">One of the primary rRNA binding proteins. Required for association of the 30S and 50S subunits to form the 70S ribosome, for tRNA binding and peptide bond formation. It has been suggested to have peptidyltransferase activity; this is somewhat controversial. Makes several contacts with the 16S rRNA in the 70S ribosome.</text>
</comment>
<comment type="subunit">
    <text evidence="1">Part of the 50S ribosomal subunit. Forms a bridge to the 30S subunit in the 70S ribosome.</text>
</comment>
<comment type="similarity">
    <text evidence="1">Belongs to the universal ribosomal protein uL2 family.</text>
</comment>
<name>RL2_METKA</name>
<gene>
    <name evidence="1" type="primary">rpl2</name>
    <name type="ordered locus">MK0412</name>
</gene>
<proteinExistence type="inferred from homology"/>
<evidence type="ECO:0000255" key="1">
    <source>
        <dbReference type="HAMAP-Rule" id="MF_01320"/>
    </source>
</evidence>
<evidence type="ECO:0000256" key="2">
    <source>
        <dbReference type="SAM" id="MobiDB-lite"/>
    </source>
</evidence>
<evidence type="ECO:0000305" key="3"/>
<feature type="chain" id="PRO_0000129716" description="Large ribosomal subunit protein uL2">
    <location>
        <begin position="1"/>
        <end position="243"/>
    </location>
</feature>
<feature type="region of interest" description="Disordered" evidence="2">
    <location>
        <begin position="1"/>
        <end position="23"/>
    </location>
</feature>
<feature type="region of interest" description="Disordered" evidence="2">
    <location>
        <begin position="204"/>
        <end position="243"/>
    </location>
</feature>
<feature type="compositionally biased region" description="Basic residues" evidence="2">
    <location>
        <begin position="228"/>
        <end position="243"/>
    </location>
</feature>
<accession>Q8TY93</accession>
<protein>
    <recommendedName>
        <fullName evidence="1">Large ribosomal subunit protein uL2</fullName>
    </recommendedName>
    <alternativeName>
        <fullName evidence="3">50S ribosomal protein L2</fullName>
    </alternativeName>
</protein>
<organism>
    <name type="scientific">Methanopyrus kandleri (strain AV19 / DSM 6324 / JCM 9639 / NBRC 100938)</name>
    <dbReference type="NCBI Taxonomy" id="190192"/>
    <lineage>
        <taxon>Archaea</taxon>
        <taxon>Methanobacteriati</taxon>
        <taxon>Methanobacteriota</taxon>
        <taxon>Methanomada group</taxon>
        <taxon>Methanopyri</taxon>
        <taxon>Methanopyrales</taxon>
        <taxon>Methanopyraceae</taxon>
        <taxon>Methanopyrus</taxon>
    </lineage>
</organism>